<protein>
    <recommendedName>
        <fullName evidence="1">Xanthine phosphoribosyltransferase</fullName>
        <shortName evidence="1">XPRTase</shortName>
        <ecNumber evidence="1">2.4.2.22</ecNumber>
    </recommendedName>
</protein>
<reference key="1">
    <citation type="journal article" date="2006" name="Proc. Natl. Acad. Sci. U.S.A.">
        <title>Molecular genetic anatomy of inter- and intraserotype variation in the human bacterial pathogen group A Streptococcus.</title>
        <authorList>
            <person name="Beres S.B."/>
            <person name="Richter E.W."/>
            <person name="Nagiec M.J."/>
            <person name="Sumby P."/>
            <person name="Porcella S.F."/>
            <person name="DeLeo F.R."/>
            <person name="Musser J.M."/>
        </authorList>
    </citation>
    <scope>NUCLEOTIDE SEQUENCE [LARGE SCALE GENOMIC DNA]</scope>
    <source>
        <strain>MGAS9429</strain>
    </source>
</reference>
<feature type="chain" id="PRO_0000339768" description="Xanthine phosphoribosyltransferase">
    <location>
        <begin position="1"/>
        <end position="193"/>
    </location>
</feature>
<feature type="binding site" evidence="1">
    <location>
        <position position="20"/>
    </location>
    <ligand>
        <name>xanthine</name>
        <dbReference type="ChEBI" id="CHEBI:17712"/>
    </ligand>
</feature>
<feature type="binding site" evidence="1">
    <location>
        <position position="27"/>
    </location>
    <ligand>
        <name>xanthine</name>
        <dbReference type="ChEBI" id="CHEBI:17712"/>
    </ligand>
</feature>
<feature type="binding site" evidence="1">
    <location>
        <begin position="128"/>
        <end position="132"/>
    </location>
    <ligand>
        <name>5-phospho-alpha-D-ribose 1-diphosphate</name>
        <dbReference type="ChEBI" id="CHEBI:58017"/>
    </ligand>
</feature>
<feature type="binding site" evidence="1">
    <location>
        <position position="156"/>
    </location>
    <ligand>
        <name>xanthine</name>
        <dbReference type="ChEBI" id="CHEBI:17712"/>
    </ligand>
</feature>
<comment type="function">
    <text evidence="1">Converts the preformed base xanthine, a product of nucleic acid breakdown, to xanthosine 5'-monophosphate (XMP), so it can be reused for RNA or DNA synthesis.</text>
</comment>
<comment type="catalytic activity">
    <reaction evidence="1">
        <text>XMP + diphosphate = xanthine + 5-phospho-alpha-D-ribose 1-diphosphate</text>
        <dbReference type="Rhea" id="RHEA:10800"/>
        <dbReference type="ChEBI" id="CHEBI:17712"/>
        <dbReference type="ChEBI" id="CHEBI:33019"/>
        <dbReference type="ChEBI" id="CHEBI:57464"/>
        <dbReference type="ChEBI" id="CHEBI:58017"/>
        <dbReference type="EC" id="2.4.2.22"/>
    </reaction>
</comment>
<comment type="pathway">
    <text evidence="1">Purine metabolism; XMP biosynthesis via salvage pathway; XMP from xanthine: step 1/1.</text>
</comment>
<comment type="subunit">
    <text evidence="1">Homodimer.</text>
</comment>
<comment type="subcellular location">
    <subcellularLocation>
        <location evidence="1">Cytoplasm</location>
    </subcellularLocation>
</comment>
<comment type="similarity">
    <text evidence="1">Belongs to the purine/pyrimidine phosphoribosyltransferase family. Xpt subfamily.</text>
</comment>
<evidence type="ECO:0000255" key="1">
    <source>
        <dbReference type="HAMAP-Rule" id="MF_01184"/>
    </source>
</evidence>
<accession>Q1JLQ7</accession>
<dbReference type="EC" id="2.4.2.22" evidence="1"/>
<dbReference type="EMBL" id="CP000259">
    <property type="protein sequence ID" value="ABF32162.1"/>
    <property type="molecule type" value="Genomic_DNA"/>
</dbReference>
<dbReference type="RefSeq" id="WP_002984677.1">
    <property type="nucleotide sequence ID" value="NC_008021.1"/>
</dbReference>
<dbReference type="SMR" id="Q1JLQ7"/>
<dbReference type="KEGG" id="spk:MGAS9429_Spy0975"/>
<dbReference type="HOGENOM" id="CLU_099015_0_0_9"/>
<dbReference type="UniPathway" id="UPA00602">
    <property type="reaction ID" value="UER00658"/>
</dbReference>
<dbReference type="Proteomes" id="UP000002433">
    <property type="component" value="Chromosome"/>
</dbReference>
<dbReference type="GO" id="GO:0005737">
    <property type="term" value="C:cytoplasm"/>
    <property type="evidence" value="ECO:0007669"/>
    <property type="project" value="UniProtKB-SubCell"/>
</dbReference>
<dbReference type="GO" id="GO:0000310">
    <property type="term" value="F:xanthine phosphoribosyltransferase activity"/>
    <property type="evidence" value="ECO:0007669"/>
    <property type="project" value="UniProtKB-UniRule"/>
</dbReference>
<dbReference type="GO" id="GO:0006166">
    <property type="term" value="P:purine ribonucleoside salvage"/>
    <property type="evidence" value="ECO:0007669"/>
    <property type="project" value="UniProtKB-KW"/>
</dbReference>
<dbReference type="GO" id="GO:0046110">
    <property type="term" value="P:xanthine metabolic process"/>
    <property type="evidence" value="ECO:0007669"/>
    <property type="project" value="InterPro"/>
</dbReference>
<dbReference type="GO" id="GO:0032265">
    <property type="term" value="P:XMP salvage"/>
    <property type="evidence" value="ECO:0007669"/>
    <property type="project" value="UniProtKB-UniRule"/>
</dbReference>
<dbReference type="CDD" id="cd06223">
    <property type="entry name" value="PRTases_typeI"/>
    <property type="match status" value="1"/>
</dbReference>
<dbReference type="Gene3D" id="3.40.50.2020">
    <property type="match status" value="1"/>
</dbReference>
<dbReference type="HAMAP" id="MF_01184">
    <property type="entry name" value="XPRTase"/>
    <property type="match status" value="1"/>
</dbReference>
<dbReference type="InterPro" id="IPR000836">
    <property type="entry name" value="PRibTrfase_dom"/>
</dbReference>
<dbReference type="InterPro" id="IPR029057">
    <property type="entry name" value="PRTase-like"/>
</dbReference>
<dbReference type="InterPro" id="IPR050118">
    <property type="entry name" value="Pur/Pyrimidine_PRTase"/>
</dbReference>
<dbReference type="InterPro" id="IPR010079">
    <property type="entry name" value="Xanthine_PRibTrfase"/>
</dbReference>
<dbReference type="NCBIfam" id="NF006671">
    <property type="entry name" value="PRK09219.1"/>
    <property type="match status" value="1"/>
</dbReference>
<dbReference type="NCBIfam" id="TIGR01744">
    <property type="entry name" value="XPRTase"/>
    <property type="match status" value="1"/>
</dbReference>
<dbReference type="PANTHER" id="PTHR43864">
    <property type="entry name" value="HYPOXANTHINE/GUANINE PHOSPHORIBOSYLTRANSFERASE"/>
    <property type="match status" value="1"/>
</dbReference>
<dbReference type="PANTHER" id="PTHR43864:SF1">
    <property type="entry name" value="XANTHINE PHOSPHORIBOSYLTRANSFERASE"/>
    <property type="match status" value="1"/>
</dbReference>
<dbReference type="Pfam" id="PF00156">
    <property type="entry name" value="Pribosyltran"/>
    <property type="match status" value="1"/>
</dbReference>
<dbReference type="SUPFAM" id="SSF53271">
    <property type="entry name" value="PRTase-like"/>
    <property type="match status" value="1"/>
</dbReference>
<keyword id="KW-0963">Cytoplasm</keyword>
<keyword id="KW-0328">Glycosyltransferase</keyword>
<keyword id="KW-0660">Purine salvage</keyword>
<keyword id="KW-0808">Transferase</keyword>
<organism>
    <name type="scientific">Streptococcus pyogenes serotype M12 (strain MGAS9429)</name>
    <dbReference type="NCBI Taxonomy" id="370551"/>
    <lineage>
        <taxon>Bacteria</taxon>
        <taxon>Bacillati</taxon>
        <taxon>Bacillota</taxon>
        <taxon>Bacilli</taxon>
        <taxon>Lactobacillales</taxon>
        <taxon>Streptococcaceae</taxon>
        <taxon>Streptococcus</taxon>
    </lineage>
</organism>
<sequence>MQLLEERILTDGNILGENILKVDNFLTHQVDYRLMKAIGKVFAQKYAEAGITKVVTIEASGIAPAVYAAEAMDVPMIFAKKHKNITMTEGILTAEVYSFTKQVTSTVSIAGKFLSKEDKVLIIDDFLANGQAAKGLIEIIGQAGAQVVGVGIVIEKSFQDGRRLIEDMGIEVTSLARIKNFENGNLNFLEADA</sequence>
<proteinExistence type="inferred from homology"/>
<name>XPT_STRPC</name>
<gene>
    <name evidence="1" type="primary">xpt</name>
    <name type="ordered locus">MGAS9429_Spy0975</name>
</gene>